<name>RLMF_SALG2</name>
<organism>
    <name type="scientific">Salmonella gallinarum (strain 287/91 / NCTC 13346)</name>
    <dbReference type="NCBI Taxonomy" id="550538"/>
    <lineage>
        <taxon>Bacteria</taxon>
        <taxon>Pseudomonadati</taxon>
        <taxon>Pseudomonadota</taxon>
        <taxon>Gammaproteobacteria</taxon>
        <taxon>Enterobacterales</taxon>
        <taxon>Enterobacteriaceae</taxon>
        <taxon>Salmonella</taxon>
    </lineage>
</organism>
<proteinExistence type="inferred from homology"/>
<evidence type="ECO:0000255" key="1">
    <source>
        <dbReference type="HAMAP-Rule" id="MF_01848"/>
    </source>
</evidence>
<comment type="function">
    <text evidence="1">Specifically methylates the adenine in position 1618 of 23S rRNA.</text>
</comment>
<comment type="catalytic activity">
    <reaction evidence="1">
        <text>adenosine(1618) in 23S rRNA + S-adenosyl-L-methionine = N(6)-methyladenosine(1618) in 23S rRNA + S-adenosyl-L-homocysteine + H(+)</text>
        <dbReference type="Rhea" id="RHEA:16497"/>
        <dbReference type="Rhea" id="RHEA-COMP:10229"/>
        <dbReference type="Rhea" id="RHEA-COMP:10231"/>
        <dbReference type="ChEBI" id="CHEBI:15378"/>
        <dbReference type="ChEBI" id="CHEBI:57856"/>
        <dbReference type="ChEBI" id="CHEBI:59789"/>
        <dbReference type="ChEBI" id="CHEBI:74411"/>
        <dbReference type="ChEBI" id="CHEBI:74449"/>
        <dbReference type="EC" id="2.1.1.181"/>
    </reaction>
</comment>
<comment type="subcellular location">
    <subcellularLocation>
        <location evidence="1">Cytoplasm</location>
    </subcellularLocation>
</comment>
<comment type="similarity">
    <text evidence="1">Belongs to the methyltransferase superfamily. METTL16/RlmF family.</text>
</comment>
<feature type="chain" id="PRO_1000188531" description="Ribosomal RNA large subunit methyltransferase F">
    <location>
        <begin position="1"/>
        <end position="308"/>
    </location>
</feature>
<keyword id="KW-0963">Cytoplasm</keyword>
<keyword id="KW-0489">Methyltransferase</keyword>
<keyword id="KW-0698">rRNA processing</keyword>
<keyword id="KW-0949">S-adenosyl-L-methionine</keyword>
<keyword id="KW-0808">Transferase</keyword>
<protein>
    <recommendedName>
        <fullName evidence="1">Ribosomal RNA large subunit methyltransferase F</fullName>
        <ecNumber evidence="1">2.1.1.181</ecNumber>
    </recommendedName>
    <alternativeName>
        <fullName evidence="1">23S rRNA mA1618 methyltransferase</fullName>
    </alternativeName>
    <alternativeName>
        <fullName evidence="1">rRNA adenine N-6-methyltransferase</fullName>
    </alternativeName>
</protein>
<reference key="1">
    <citation type="journal article" date="2008" name="Genome Res.">
        <title>Comparative genome analysis of Salmonella enteritidis PT4 and Salmonella gallinarum 287/91 provides insights into evolutionary and host adaptation pathways.</title>
        <authorList>
            <person name="Thomson N.R."/>
            <person name="Clayton D.J."/>
            <person name="Windhorst D."/>
            <person name="Vernikos G."/>
            <person name="Davidson S."/>
            <person name="Churcher C."/>
            <person name="Quail M.A."/>
            <person name="Stevens M."/>
            <person name="Jones M.A."/>
            <person name="Watson M."/>
            <person name="Barron A."/>
            <person name="Layton A."/>
            <person name="Pickard D."/>
            <person name="Kingsley R.A."/>
            <person name="Bignell A."/>
            <person name="Clark L."/>
            <person name="Harris B."/>
            <person name="Ormond D."/>
            <person name="Abdellah Z."/>
            <person name="Brooks K."/>
            <person name="Cherevach I."/>
            <person name="Chillingworth T."/>
            <person name="Woodward J."/>
            <person name="Norberczak H."/>
            <person name="Lord A."/>
            <person name="Arrowsmith C."/>
            <person name="Jagels K."/>
            <person name="Moule S."/>
            <person name="Mungall K."/>
            <person name="Saunders M."/>
            <person name="Whitehead S."/>
            <person name="Chabalgoity J.A."/>
            <person name="Maskell D."/>
            <person name="Humphreys T."/>
            <person name="Roberts M."/>
            <person name="Barrow P.A."/>
            <person name="Dougan G."/>
            <person name="Parkhill J."/>
        </authorList>
    </citation>
    <scope>NUCLEOTIDE SEQUENCE [LARGE SCALE GENOMIC DNA]</scope>
    <source>
        <strain>287/91 / NCTC 13346</strain>
    </source>
</reference>
<sequence length="308" mass="34310">MSAQKPGLHPRNRHQHRYDLAALCQTTPELTSFLIRTPAGEQSVDFANPQAVKALNKALLAHFYAVTHWDIPPGFLCPPVPGRADYIHHLADLLGETTGSIPAQATILDVGVGANCIYPLIGVHEYGWRFTGSEVSDAAMSSAQAIIQANTGLSRAIRLRRQKDPAAIFTGIIHKNEFYDATLCNPPFHDSAAAARAGSERKRRNLGQNKDDALNFGGQQQELWCEGGEVAFIKKMIAESQSFRRQVLWFTTLVSRGENLPPLYRALTEAGAVKVVKKEMAQGQKQSRFIAWTFMDDDQRRRFITRKR</sequence>
<dbReference type="EC" id="2.1.1.181" evidence="1"/>
<dbReference type="EMBL" id="AM933173">
    <property type="protein sequence ID" value="CAR36699.1"/>
    <property type="molecule type" value="Genomic_DNA"/>
</dbReference>
<dbReference type="RefSeq" id="WP_001275962.1">
    <property type="nucleotide sequence ID" value="NC_011274.1"/>
</dbReference>
<dbReference type="SMR" id="B5R792"/>
<dbReference type="KEGG" id="seg:SG0804"/>
<dbReference type="HOGENOM" id="CLU_027534_3_0_6"/>
<dbReference type="Proteomes" id="UP000008321">
    <property type="component" value="Chromosome"/>
</dbReference>
<dbReference type="GO" id="GO:0005737">
    <property type="term" value="C:cytoplasm"/>
    <property type="evidence" value="ECO:0007669"/>
    <property type="project" value="UniProtKB-SubCell"/>
</dbReference>
<dbReference type="GO" id="GO:0052907">
    <property type="term" value="F:23S rRNA (adenine(1618)-N(6))-methyltransferase activity"/>
    <property type="evidence" value="ECO:0007669"/>
    <property type="project" value="UniProtKB-EC"/>
</dbReference>
<dbReference type="GO" id="GO:0070475">
    <property type="term" value="P:rRNA base methylation"/>
    <property type="evidence" value="ECO:0007669"/>
    <property type="project" value="TreeGrafter"/>
</dbReference>
<dbReference type="FunFam" id="3.40.50.150:FF:000045">
    <property type="entry name" value="Ribosomal RNA large subunit methyltransferase F"/>
    <property type="match status" value="1"/>
</dbReference>
<dbReference type="Gene3D" id="3.40.50.150">
    <property type="entry name" value="Vaccinia Virus protein VP39"/>
    <property type="match status" value="1"/>
</dbReference>
<dbReference type="HAMAP" id="MF_01848">
    <property type="entry name" value="23SrRNA_methyltr_F"/>
    <property type="match status" value="1"/>
</dbReference>
<dbReference type="InterPro" id="IPR010286">
    <property type="entry name" value="METTL16/RlmF"/>
</dbReference>
<dbReference type="InterPro" id="IPR016909">
    <property type="entry name" value="rRNA_lsu_MeTfrase_F"/>
</dbReference>
<dbReference type="InterPro" id="IPR029063">
    <property type="entry name" value="SAM-dependent_MTases_sf"/>
</dbReference>
<dbReference type="NCBIfam" id="NF008725">
    <property type="entry name" value="PRK11727.1"/>
    <property type="match status" value="1"/>
</dbReference>
<dbReference type="PANTHER" id="PTHR13393:SF0">
    <property type="entry name" value="RNA N6-ADENOSINE-METHYLTRANSFERASE METTL16"/>
    <property type="match status" value="1"/>
</dbReference>
<dbReference type="PANTHER" id="PTHR13393">
    <property type="entry name" value="SAM-DEPENDENT METHYLTRANSFERASE"/>
    <property type="match status" value="1"/>
</dbReference>
<dbReference type="Pfam" id="PF05971">
    <property type="entry name" value="Methyltransf_10"/>
    <property type="match status" value="1"/>
</dbReference>
<dbReference type="PIRSF" id="PIRSF029038">
    <property type="entry name" value="Mtase_YbiN_prd"/>
    <property type="match status" value="1"/>
</dbReference>
<dbReference type="SUPFAM" id="SSF53335">
    <property type="entry name" value="S-adenosyl-L-methionine-dependent methyltransferases"/>
    <property type="match status" value="1"/>
</dbReference>
<gene>
    <name evidence="1" type="primary">rlmF</name>
    <name type="ordered locus">SG0804</name>
</gene>
<accession>B5R792</accession>